<accession>O52474</accession>
<keyword id="KW-0004">4Fe-4S</keyword>
<keyword id="KW-0148">Chlorophyll</keyword>
<keyword id="KW-0157">Chromophore</keyword>
<keyword id="KW-0249">Electron transport</keyword>
<keyword id="KW-0408">Iron</keyword>
<keyword id="KW-0411">Iron-sulfur</keyword>
<keyword id="KW-0460">Magnesium</keyword>
<keyword id="KW-0472">Membrane</keyword>
<keyword id="KW-0479">Metal-binding</keyword>
<keyword id="KW-0560">Oxidoreductase</keyword>
<keyword id="KW-0602">Photosynthesis</keyword>
<keyword id="KW-0603">Photosystem I</keyword>
<keyword id="KW-0793">Thylakoid</keyword>
<keyword id="KW-0812">Transmembrane</keyword>
<keyword id="KW-1133">Transmembrane helix</keyword>
<keyword id="KW-0813">Transport</keyword>
<sequence>MTISPPEREEKKARVIVDNDPVPTSFELWAKPGHFDRTLARGPKTTTWIWNLHALAHDFDTHTSDLEDISRKIFAAHFGHLAVVTLWLSGMIFHGARFSNYEAWLSDPLHVKPSAQVVWPIVGQDILNGDVGGGFHGIQITSGLFQIWRGWGITNSFQLYVTAIGGLVLAGLFLFAGWFHYHKRAPKLEWFQNVESMLNHHLAVLLGCGSLGWAGHLIHVSAPTNKLLDAGVSVKDIPLPHEFILNKGLLTELYPGFASGITPFFTLNWGQYADFLTFKGGLNPVTGGLWLTDISHHHLAIAVLFIIAGHMYRTNWGIGHSIKEILENHKGPFTGEGHKGLYENMTTSWHAQLATNLAFLGSLTIIVAHHMYAMPPYPYLATDYATQLCIFTHHMWIGGFLIVGGAAHATIFMVRDYDPVVNQNNVLDRVIRHRDAIISHLNWVCIFLGFHSFGLYVHNDTMRALGRPQDMFSDTAIQLQPVFAQWVQNIHTLAPGSTAPNALEPASYAFGGGIVAVGGKVAMMPIALGTADFLVHHIHAFTIHVTVLILLKGFLFARNSRLIPDKANLGFRFPCDGPGRGGTCQVSGWDHVFLGLFWMYNSISIVIFHFSWKMQSDVWGTVDAAGNVTHITGGNWAQSALTINGWLRDFLWAQSVQVINSYGSALSAYGLMFLGAHFIWAFSLMFLFSGRGYWQELIESIVWAHNKLKVAPAIQPRALSIIQGRAVGVAHYLLGGIATTWAFFHAHILSLG</sequence>
<proteinExistence type="inferred from homology"/>
<comment type="function">
    <text evidence="1">PsaA and PsaB bind P700, the primary electron donor of photosystem I (PSI), as well as the electron acceptors A0, A1 and FX. PSI is a plastocyanin/cytochrome c6-ferredoxin oxidoreductase, converting photonic excitation into a charge separation, which transfers an electron from the donor P700 chlorophyll pair to the spectroscopically characterized acceptors A0, A1, FX, FA and FB in turn. Oxidized P700 is reduced on the lumenal side of the thylakoid membrane by plastocyanin or cytochrome c6.</text>
</comment>
<comment type="catalytic activity">
    <reaction evidence="1">
        <text>reduced [plastocyanin] + hnu + oxidized [2Fe-2S]-[ferredoxin] = oxidized [plastocyanin] + reduced [2Fe-2S]-[ferredoxin]</text>
        <dbReference type="Rhea" id="RHEA:30407"/>
        <dbReference type="Rhea" id="RHEA-COMP:10000"/>
        <dbReference type="Rhea" id="RHEA-COMP:10001"/>
        <dbReference type="Rhea" id="RHEA-COMP:10039"/>
        <dbReference type="Rhea" id="RHEA-COMP:10040"/>
        <dbReference type="ChEBI" id="CHEBI:29036"/>
        <dbReference type="ChEBI" id="CHEBI:30212"/>
        <dbReference type="ChEBI" id="CHEBI:33737"/>
        <dbReference type="ChEBI" id="CHEBI:33738"/>
        <dbReference type="ChEBI" id="CHEBI:49552"/>
        <dbReference type="EC" id="1.97.1.12"/>
    </reaction>
</comment>
<comment type="cofactor">
    <text evidence="1">PSI electron transfer chain: 5 chlorophyll a, 1 chlorophyll a', 2 phylloquinones and 3 4Fe-4S clusters. PSI core antenna: 90 chlorophyll a, 22 carotenoids, 3 phospholipids and 1 galactolipid. P700 is a chlorophyll a/chlorophyll a' dimer, A0 is one or more chlorophyll a, A1 is one or both phylloquinones and FX is a shared 4Fe-4S iron-sulfur center.</text>
</comment>
<comment type="subunit">
    <text evidence="1">The PsaA/B heterodimer binds the P700 chlorophyll special pair and subsequent electron acceptors. PSI consists of a core antenna complex that captures photons, and an electron transfer chain that converts photonic excitation into a charge separation. The cyanobacterial PSI reaction center is composed of one copy each of PsaA,B,C,D,E,F,I,J,K,L,M and X, and forms trimeric complexes.</text>
</comment>
<comment type="subcellular location">
    <subcellularLocation>
        <location evidence="1">Cellular thylakoid membrane</location>
        <topology evidence="1">Multi-pass membrane protein</topology>
    </subcellularLocation>
</comment>
<comment type="similarity">
    <text evidence="1">Belongs to the PsaA/PsaB family.</text>
</comment>
<name>PSAA_MASLA</name>
<dbReference type="EC" id="1.97.1.12" evidence="1"/>
<dbReference type="EMBL" id="AF038558">
    <property type="protein sequence ID" value="AAC12866.1"/>
    <property type="molecule type" value="Genomic_DNA"/>
</dbReference>
<dbReference type="SMR" id="O52474"/>
<dbReference type="GO" id="GO:0009522">
    <property type="term" value="C:photosystem I"/>
    <property type="evidence" value="ECO:0007669"/>
    <property type="project" value="UniProtKB-KW"/>
</dbReference>
<dbReference type="GO" id="GO:0031676">
    <property type="term" value="C:plasma membrane-derived thylakoid membrane"/>
    <property type="evidence" value="ECO:0007669"/>
    <property type="project" value="UniProtKB-SubCell"/>
</dbReference>
<dbReference type="GO" id="GO:0051539">
    <property type="term" value="F:4 iron, 4 sulfur cluster binding"/>
    <property type="evidence" value="ECO:0007669"/>
    <property type="project" value="UniProtKB-KW"/>
</dbReference>
<dbReference type="GO" id="GO:0016168">
    <property type="term" value="F:chlorophyll binding"/>
    <property type="evidence" value="ECO:0007669"/>
    <property type="project" value="UniProtKB-KW"/>
</dbReference>
<dbReference type="GO" id="GO:0009055">
    <property type="term" value="F:electron transfer activity"/>
    <property type="evidence" value="ECO:0007669"/>
    <property type="project" value="UniProtKB-UniRule"/>
</dbReference>
<dbReference type="GO" id="GO:0000287">
    <property type="term" value="F:magnesium ion binding"/>
    <property type="evidence" value="ECO:0007669"/>
    <property type="project" value="UniProtKB-UniRule"/>
</dbReference>
<dbReference type="GO" id="GO:0016491">
    <property type="term" value="F:oxidoreductase activity"/>
    <property type="evidence" value="ECO:0007669"/>
    <property type="project" value="UniProtKB-KW"/>
</dbReference>
<dbReference type="GO" id="GO:0015979">
    <property type="term" value="P:photosynthesis"/>
    <property type="evidence" value="ECO:0007669"/>
    <property type="project" value="UniProtKB-UniRule"/>
</dbReference>
<dbReference type="Gene3D" id="1.20.1130.10">
    <property type="entry name" value="Photosystem I PsaA/PsaB"/>
    <property type="match status" value="1"/>
</dbReference>
<dbReference type="HAMAP" id="MF_00458">
    <property type="entry name" value="PSI_PsaA"/>
    <property type="match status" value="1"/>
</dbReference>
<dbReference type="InterPro" id="IPR006243">
    <property type="entry name" value="PSI_PsaA"/>
</dbReference>
<dbReference type="InterPro" id="IPR001280">
    <property type="entry name" value="PSI_PsaA/B"/>
</dbReference>
<dbReference type="InterPro" id="IPR020586">
    <property type="entry name" value="PSI_PsaA/B_CS"/>
</dbReference>
<dbReference type="InterPro" id="IPR036408">
    <property type="entry name" value="PSI_PsaA/B_sf"/>
</dbReference>
<dbReference type="NCBIfam" id="TIGR01335">
    <property type="entry name" value="psaA"/>
    <property type="match status" value="1"/>
</dbReference>
<dbReference type="PANTHER" id="PTHR30128">
    <property type="entry name" value="OUTER MEMBRANE PROTEIN, OMPA-RELATED"/>
    <property type="match status" value="1"/>
</dbReference>
<dbReference type="PANTHER" id="PTHR30128:SF19">
    <property type="entry name" value="PHOTOSYSTEM I P700 CHLOROPHYLL A APOPROTEIN A1-RELATED"/>
    <property type="match status" value="1"/>
</dbReference>
<dbReference type="Pfam" id="PF00223">
    <property type="entry name" value="PsaA_PsaB"/>
    <property type="match status" value="1"/>
</dbReference>
<dbReference type="PIRSF" id="PIRSF002905">
    <property type="entry name" value="PSI_A"/>
    <property type="match status" value="1"/>
</dbReference>
<dbReference type="PRINTS" id="PR00257">
    <property type="entry name" value="PHOTSYSPSAAB"/>
</dbReference>
<dbReference type="SUPFAM" id="SSF81558">
    <property type="entry name" value="Photosystem I subunits PsaA/PsaB"/>
    <property type="match status" value="1"/>
</dbReference>
<dbReference type="PROSITE" id="PS00419">
    <property type="entry name" value="PHOTOSYSTEM_I_PSAAB"/>
    <property type="match status" value="1"/>
</dbReference>
<gene>
    <name evidence="1" type="primary">psaA</name>
</gene>
<feature type="chain" id="PRO_0000088586" description="Photosystem I P700 chlorophyll a apoprotein A1">
    <location>
        <begin position="1"/>
        <end position="752"/>
    </location>
</feature>
<feature type="transmembrane region" description="Helical; Name=I" evidence="1">
    <location>
        <begin position="73"/>
        <end position="96"/>
    </location>
</feature>
<feature type="transmembrane region" description="Helical; Name=II" evidence="1">
    <location>
        <begin position="159"/>
        <end position="182"/>
    </location>
</feature>
<feature type="transmembrane region" description="Helical; Name=III" evidence="1">
    <location>
        <begin position="198"/>
        <end position="222"/>
    </location>
</feature>
<feature type="transmembrane region" description="Helical; Name=IV" evidence="1">
    <location>
        <begin position="294"/>
        <end position="312"/>
    </location>
</feature>
<feature type="transmembrane region" description="Helical; Name=V" evidence="1">
    <location>
        <begin position="349"/>
        <end position="372"/>
    </location>
</feature>
<feature type="transmembrane region" description="Helical; Name=VI" evidence="1">
    <location>
        <begin position="388"/>
        <end position="414"/>
    </location>
</feature>
<feature type="transmembrane region" description="Helical; Name=VII" evidence="1">
    <location>
        <begin position="436"/>
        <end position="458"/>
    </location>
</feature>
<feature type="transmembrane region" description="Helical; Name=VIII" evidence="1">
    <location>
        <begin position="533"/>
        <end position="551"/>
    </location>
</feature>
<feature type="transmembrane region" description="Helical; Name=IX" evidence="1">
    <location>
        <begin position="591"/>
        <end position="612"/>
    </location>
</feature>
<feature type="transmembrane region" description="Helical; Name=X" evidence="1">
    <location>
        <begin position="666"/>
        <end position="688"/>
    </location>
</feature>
<feature type="transmembrane region" description="Helical; Name=XI" evidence="1">
    <location>
        <begin position="726"/>
        <end position="746"/>
    </location>
</feature>
<feature type="binding site" evidence="1">
    <location>
        <position position="575"/>
    </location>
    <ligand>
        <name>[4Fe-4S] cluster</name>
        <dbReference type="ChEBI" id="CHEBI:49883"/>
        <note>ligand shared between dimeric partners</note>
    </ligand>
</feature>
<feature type="binding site" evidence="1">
    <location>
        <position position="584"/>
    </location>
    <ligand>
        <name>[4Fe-4S] cluster</name>
        <dbReference type="ChEBI" id="CHEBI:49883"/>
        <note>ligand shared between dimeric partners</note>
    </ligand>
</feature>
<feature type="binding site" description="axial binding residue" evidence="1">
    <location>
        <position position="677"/>
    </location>
    <ligand>
        <name>chlorophyll a'</name>
        <dbReference type="ChEBI" id="CHEBI:189419"/>
        <label>A1</label>
    </ligand>
    <ligandPart>
        <name>Mg</name>
        <dbReference type="ChEBI" id="CHEBI:25107"/>
    </ligandPart>
</feature>
<feature type="binding site" description="axial binding residue" evidence="1">
    <location>
        <position position="685"/>
    </location>
    <ligand>
        <name>chlorophyll a</name>
        <dbReference type="ChEBI" id="CHEBI:58416"/>
        <label>A3</label>
    </ligand>
    <ligandPart>
        <name>Mg</name>
        <dbReference type="ChEBI" id="CHEBI:25107"/>
    </ligandPart>
</feature>
<feature type="binding site" evidence="1">
    <location>
        <position position="693"/>
    </location>
    <ligand>
        <name>chlorophyll a</name>
        <dbReference type="ChEBI" id="CHEBI:58416"/>
        <label>A3</label>
    </ligand>
</feature>
<feature type="binding site" evidence="1">
    <location>
        <position position="694"/>
    </location>
    <ligand>
        <name>phylloquinone</name>
        <dbReference type="ChEBI" id="CHEBI:18067"/>
        <label>A</label>
    </ligand>
</feature>
<organism>
    <name type="scientific">Mastigocladus laminosus</name>
    <name type="common">Fischerella sp.</name>
    <dbReference type="NCBI Taxonomy" id="83541"/>
    <lineage>
        <taxon>Bacteria</taxon>
        <taxon>Bacillati</taxon>
        <taxon>Cyanobacteriota</taxon>
        <taxon>Cyanophyceae</taxon>
        <taxon>Nostocales</taxon>
        <taxon>Hapalosiphonaceae</taxon>
        <taxon>Mastigocladus</taxon>
    </lineage>
</organism>
<evidence type="ECO:0000255" key="1">
    <source>
        <dbReference type="HAMAP-Rule" id="MF_00458"/>
    </source>
</evidence>
<reference key="1">
    <citation type="online journal article" date="1998" name="Plant Gene Register">
        <title>Molecular cloning of the psaA and psaB genes for the core proteins of photosystem I from the thermophilic cyanobacterium Mastigocladus laminosus.</title>
        <authorList>
            <person name="Sun J."/>
            <person name="He Z.-Y."/>
            <person name="Nechushtai R."/>
            <person name="Chitnis P.R."/>
        </authorList>
        <locator>PGR98-041</locator>
    </citation>
    <scope>NUCLEOTIDE SEQUENCE [GENOMIC DNA]</scope>
    <source>
        <strain>PCC 7605</strain>
    </source>
</reference>
<protein>
    <recommendedName>
        <fullName evidence="1">Photosystem I P700 chlorophyll a apoprotein A1</fullName>
        <ecNumber evidence="1">1.97.1.12</ecNumber>
    </recommendedName>
    <alternativeName>
        <fullName evidence="1">PsaA</fullName>
    </alternativeName>
</protein>